<dbReference type="EMBL" id="AE008384">
    <property type="protein sequence ID" value="AAM31786.1"/>
    <property type="status" value="ALT_INIT"/>
    <property type="molecule type" value="Genomic_DNA"/>
</dbReference>
<dbReference type="RefSeq" id="WP_048045897.1">
    <property type="nucleotide sequence ID" value="NC_003901.1"/>
</dbReference>
<dbReference type="KEGG" id="mma:MM_2090"/>
<dbReference type="PATRIC" id="fig|192952.21.peg.2400"/>
<dbReference type="eggNOG" id="arCOG02238">
    <property type="taxonomic scope" value="Archaea"/>
</dbReference>
<dbReference type="HOGENOM" id="CLU_094511_0_2_2"/>
<dbReference type="Proteomes" id="UP000000595">
    <property type="component" value="Chromosome"/>
</dbReference>
<dbReference type="Gene3D" id="1.10.10.10">
    <property type="entry name" value="Winged helix-like DNA-binding domain superfamily/Winged helix DNA-binding domain"/>
    <property type="match status" value="1"/>
</dbReference>
<dbReference type="HAMAP" id="MF_00674">
    <property type="entry name" value="UPF0251"/>
    <property type="match status" value="1"/>
</dbReference>
<dbReference type="InterPro" id="IPR013324">
    <property type="entry name" value="RNA_pol_sigma_r3/r4-like"/>
</dbReference>
<dbReference type="InterPro" id="IPR002852">
    <property type="entry name" value="UPF0251"/>
</dbReference>
<dbReference type="InterPro" id="IPR036388">
    <property type="entry name" value="WH-like_DNA-bd_sf"/>
</dbReference>
<dbReference type="PANTHER" id="PTHR37478">
    <property type="match status" value="1"/>
</dbReference>
<dbReference type="PANTHER" id="PTHR37478:SF2">
    <property type="entry name" value="UPF0251 PROTEIN TK0562"/>
    <property type="match status" value="1"/>
</dbReference>
<dbReference type="Pfam" id="PF02001">
    <property type="entry name" value="DUF134"/>
    <property type="match status" value="1"/>
</dbReference>
<dbReference type="SUPFAM" id="SSF88659">
    <property type="entry name" value="Sigma3 and sigma4 domains of RNA polymerase sigma factors"/>
    <property type="match status" value="1"/>
</dbReference>
<accession>Q8PV84</accession>
<feature type="chain" id="PRO_0000147579" description="UPF0251 protein MM_2090">
    <location>
        <begin position="1"/>
        <end position="169"/>
    </location>
</feature>
<evidence type="ECO:0000305" key="1"/>
<reference key="1">
    <citation type="journal article" date="2002" name="J. Mol. Microbiol. Biotechnol.">
        <title>The genome of Methanosarcina mazei: evidence for lateral gene transfer between Bacteria and Archaea.</title>
        <authorList>
            <person name="Deppenmeier U."/>
            <person name="Johann A."/>
            <person name="Hartsch T."/>
            <person name="Merkl R."/>
            <person name="Schmitz R.A."/>
            <person name="Martinez-Arias R."/>
            <person name="Henne A."/>
            <person name="Wiezer A."/>
            <person name="Baeumer S."/>
            <person name="Jacobi C."/>
            <person name="Brueggemann H."/>
            <person name="Lienard T."/>
            <person name="Christmann A."/>
            <person name="Boemecke M."/>
            <person name="Steckel S."/>
            <person name="Bhattacharyya A."/>
            <person name="Lykidis A."/>
            <person name="Overbeek R."/>
            <person name="Klenk H.-P."/>
            <person name="Gunsalus R.P."/>
            <person name="Fritz H.-J."/>
            <person name="Gottschalk G."/>
        </authorList>
    </citation>
    <scope>NUCLEOTIDE SEQUENCE [LARGE SCALE GENOMIC DNA]</scope>
    <source>
        <strain>ATCC BAA-159 / DSM 3647 / Goe1 / Go1 / JCM 11833 / OCM 88</strain>
    </source>
</reference>
<gene>
    <name type="ordered locus">MM_2090</name>
</gene>
<comment type="similarity">
    <text evidence="1">Belongs to the UPF0251 family.</text>
</comment>
<comment type="sequence caution" evidence="1">
    <conflict type="erroneous initiation">
        <sequence resource="EMBL-CDS" id="AAM31786"/>
    </conflict>
</comment>
<sequence length="169" mass="19292">MVNRVKRRVSCFPKATYYKPREIPLCCLETANLSIEEIEAIRLCDLLQMEQNEAADRMGISRKTFWSDLQRARQKVADALVNGKAIEISGGEYVNTGECRIHFLCKECDHVWEAKFDQSRPTSCPNCGSNLIFRLGGDGKGKRFIENDYCCPKEKESSRSTDEGSKKKR</sequence>
<proteinExistence type="inferred from homology"/>
<protein>
    <recommendedName>
        <fullName>UPF0251 protein MM_2090</fullName>
    </recommendedName>
</protein>
<organism>
    <name type="scientific">Methanosarcina mazei (strain ATCC BAA-159 / DSM 3647 / Goe1 / Go1 / JCM 11833 / OCM 88)</name>
    <name type="common">Methanosarcina frisia</name>
    <dbReference type="NCBI Taxonomy" id="192952"/>
    <lineage>
        <taxon>Archaea</taxon>
        <taxon>Methanobacteriati</taxon>
        <taxon>Methanobacteriota</taxon>
        <taxon>Stenosarchaea group</taxon>
        <taxon>Methanomicrobia</taxon>
        <taxon>Methanosarcinales</taxon>
        <taxon>Methanosarcinaceae</taxon>
        <taxon>Methanosarcina</taxon>
    </lineage>
</organism>
<name>Y2090_METMA</name>